<comment type="function">
    <text evidence="1">Catalyzes the 2-thiolation of uridine at the wobble position (U34) of tRNA, leading to the formation of s(2)U34.</text>
</comment>
<comment type="catalytic activity">
    <reaction evidence="1">
        <text>S-sulfanyl-L-cysteinyl-[protein] + uridine(34) in tRNA + AH2 + ATP = 2-thiouridine(34) in tRNA + L-cysteinyl-[protein] + A + AMP + diphosphate + H(+)</text>
        <dbReference type="Rhea" id="RHEA:47032"/>
        <dbReference type="Rhea" id="RHEA-COMP:10131"/>
        <dbReference type="Rhea" id="RHEA-COMP:11726"/>
        <dbReference type="Rhea" id="RHEA-COMP:11727"/>
        <dbReference type="Rhea" id="RHEA-COMP:11728"/>
        <dbReference type="ChEBI" id="CHEBI:13193"/>
        <dbReference type="ChEBI" id="CHEBI:15378"/>
        <dbReference type="ChEBI" id="CHEBI:17499"/>
        <dbReference type="ChEBI" id="CHEBI:29950"/>
        <dbReference type="ChEBI" id="CHEBI:30616"/>
        <dbReference type="ChEBI" id="CHEBI:33019"/>
        <dbReference type="ChEBI" id="CHEBI:61963"/>
        <dbReference type="ChEBI" id="CHEBI:65315"/>
        <dbReference type="ChEBI" id="CHEBI:87170"/>
        <dbReference type="ChEBI" id="CHEBI:456215"/>
        <dbReference type="EC" id="2.8.1.13"/>
    </reaction>
</comment>
<comment type="subcellular location">
    <subcellularLocation>
        <location evidence="1">Cytoplasm</location>
    </subcellularLocation>
</comment>
<comment type="similarity">
    <text evidence="1">Belongs to the MnmA/TRMU family.</text>
</comment>
<proteinExistence type="inferred from homology"/>
<feature type="chain" id="PRO_1000009569" description="tRNA-specific 2-thiouridylase MnmA">
    <location>
        <begin position="1"/>
        <end position="383"/>
    </location>
</feature>
<feature type="region of interest" description="Interaction with tRNA" evidence="1">
    <location>
        <begin position="155"/>
        <end position="157"/>
    </location>
</feature>
<feature type="region of interest" description="Interaction with tRNA" evidence="1">
    <location>
        <begin position="315"/>
        <end position="316"/>
    </location>
</feature>
<feature type="active site" description="Nucleophile" evidence="1">
    <location>
        <position position="107"/>
    </location>
</feature>
<feature type="active site" description="Cysteine persulfide intermediate" evidence="1">
    <location>
        <position position="206"/>
    </location>
</feature>
<feature type="binding site" evidence="1">
    <location>
        <begin position="10"/>
        <end position="17"/>
    </location>
    <ligand>
        <name>ATP</name>
        <dbReference type="ChEBI" id="CHEBI:30616"/>
    </ligand>
</feature>
<feature type="binding site" evidence="1">
    <location>
        <position position="36"/>
    </location>
    <ligand>
        <name>ATP</name>
        <dbReference type="ChEBI" id="CHEBI:30616"/>
    </ligand>
</feature>
<feature type="binding site" evidence="1">
    <location>
        <position position="131"/>
    </location>
    <ligand>
        <name>ATP</name>
        <dbReference type="ChEBI" id="CHEBI:30616"/>
    </ligand>
</feature>
<feature type="site" description="Interaction with tRNA" evidence="1">
    <location>
        <position position="132"/>
    </location>
</feature>
<feature type="site" description="Interaction with tRNA" evidence="1">
    <location>
        <position position="348"/>
    </location>
</feature>
<feature type="disulfide bond" description="Alternate" evidence="1">
    <location>
        <begin position="107"/>
        <end position="206"/>
    </location>
</feature>
<reference key="1">
    <citation type="journal article" date="2005" name="Proc. Natl. Acad. Sci. U.S.A.">
        <title>The genome of Salinibacter ruber: convergence and gene exchange among hyperhalophilic bacteria and archaea.</title>
        <authorList>
            <person name="Mongodin E.F."/>
            <person name="Nelson K.E."/>
            <person name="Daugherty S."/>
            <person name="DeBoy R.T."/>
            <person name="Wister J."/>
            <person name="Khouri H."/>
            <person name="Weidman J."/>
            <person name="Walsh D.A."/>
            <person name="Papke R.T."/>
            <person name="Sanchez Perez G."/>
            <person name="Sharma A.K."/>
            <person name="Nesbo C.L."/>
            <person name="MacLeod D."/>
            <person name="Bapteste E."/>
            <person name="Doolittle W.F."/>
            <person name="Charlebois R.L."/>
            <person name="Legault B."/>
            <person name="Rodriguez-Valera F."/>
        </authorList>
    </citation>
    <scope>NUCLEOTIDE SEQUENCE [LARGE SCALE GENOMIC DNA]</scope>
    <source>
        <strain>DSM 13855 / CECT 5946 / M31</strain>
    </source>
</reference>
<gene>
    <name evidence="1" type="primary">mnmA</name>
    <name type="synonym">trmU</name>
    <name type="ordered locus">SRU_2494</name>
</gene>
<sequence>MSKKGRVLVAMSGGVDSSVTAVLLKERGYDVVGLTMKTWDYSTSGGRDGKEVGCCSIESMNDARVVATEHGFPHFVVDLREEFGDWVIERFTDEYLSGRTPNPCVLCNTHIKWDALLQRADDLDCEYIATGHYANVRYDDERDRYLLSRGLDRNKDQSYALWGLPQEHLARSIFPLGAYEKPEIREMAAEFGLDNVADKPDSYEICFIPDNDYPRFLKDRVDGLEEEVSGGTFVLSDGTVVGEHDGYPFYTIGQRRGLDLALGERVYVTDIDPETNTITVGPKEELMEQTLTAHEINLVKYPELDGERPAWGTIRYNDDGAGCLAWQPDEDTLKVAFAEPKRAITPGQSLVLYEDEDVLGGGWIHEVGGAENEAAERAAEAPA</sequence>
<keyword id="KW-0067">ATP-binding</keyword>
<keyword id="KW-0963">Cytoplasm</keyword>
<keyword id="KW-1015">Disulfide bond</keyword>
<keyword id="KW-0547">Nucleotide-binding</keyword>
<keyword id="KW-1185">Reference proteome</keyword>
<keyword id="KW-0694">RNA-binding</keyword>
<keyword id="KW-0808">Transferase</keyword>
<keyword id="KW-0819">tRNA processing</keyword>
<keyword id="KW-0820">tRNA-binding</keyword>
<dbReference type="EC" id="2.8.1.13" evidence="1"/>
<dbReference type="EMBL" id="CP000159">
    <property type="protein sequence ID" value="ABC45755.1"/>
    <property type="molecule type" value="Genomic_DNA"/>
</dbReference>
<dbReference type="RefSeq" id="WP_011405206.1">
    <property type="nucleotide sequence ID" value="NC_007677.1"/>
</dbReference>
<dbReference type="RefSeq" id="YP_446592.1">
    <property type="nucleotide sequence ID" value="NC_007677.1"/>
</dbReference>
<dbReference type="SMR" id="Q2RZN9"/>
<dbReference type="STRING" id="309807.SRU_2494"/>
<dbReference type="EnsemblBacteria" id="ABC45755">
    <property type="protein sequence ID" value="ABC45755"/>
    <property type="gene ID" value="SRU_2494"/>
</dbReference>
<dbReference type="KEGG" id="sru:SRU_2494"/>
<dbReference type="PATRIC" id="fig|309807.25.peg.2595"/>
<dbReference type="eggNOG" id="COG0482">
    <property type="taxonomic scope" value="Bacteria"/>
</dbReference>
<dbReference type="HOGENOM" id="CLU_035188_0_0_10"/>
<dbReference type="OrthoDB" id="9800696at2"/>
<dbReference type="Proteomes" id="UP000008674">
    <property type="component" value="Chromosome"/>
</dbReference>
<dbReference type="GO" id="GO:0005737">
    <property type="term" value="C:cytoplasm"/>
    <property type="evidence" value="ECO:0007669"/>
    <property type="project" value="UniProtKB-SubCell"/>
</dbReference>
<dbReference type="GO" id="GO:0005524">
    <property type="term" value="F:ATP binding"/>
    <property type="evidence" value="ECO:0007669"/>
    <property type="project" value="UniProtKB-KW"/>
</dbReference>
<dbReference type="GO" id="GO:0000049">
    <property type="term" value="F:tRNA binding"/>
    <property type="evidence" value="ECO:0007669"/>
    <property type="project" value="UniProtKB-KW"/>
</dbReference>
<dbReference type="GO" id="GO:0103016">
    <property type="term" value="F:tRNA-uridine 2-sulfurtransferase activity"/>
    <property type="evidence" value="ECO:0007669"/>
    <property type="project" value="UniProtKB-EC"/>
</dbReference>
<dbReference type="GO" id="GO:0002143">
    <property type="term" value="P:tRNA wobble position uridine thiolation"/>
    <property type="evidence" value="ECO:0007669"/>
    <property type="project" value="TreeGrafter"/>
</dbReference>
<dbReference type="CDD" id="cd01998">
    <property type="entry name" value="MnmA_TRMU-like"/>
    <property type="match status" value="1"/>
</dbReference>
<dbReference type="FunFam" id="2.30.30.280:FF:000001">
    <property type="entry name" value="tRNA-specific 2-thiouridylase MnmA"/>
    <property type="match status" value="1"/>
</dbReference>
<dbReference type="FunFam" id="3.40.50.620:FF:000115">
    <property type="entry name" value="tRNA-specific 2-thiouridylase MnmA"/>
    <property type="match status" value="1"/>
</dbReference>
<dbReference type="Gene3D" id="2.30.30.280">
    <property type="entry name" value="Adenine nucleotide alpha hydrolases-like domains"/>
    <property type="match status" value="1"/>
</dbReference>
<dbReference type="Gene3D" id="3.40.50.620">
    <property type="entry name" value="HUPs"/>
    <property type="match status" value="1"/>
</dbReference>
<dbReference type="Gene3D" id="2.40.30.10">
    <property type="entry name" value="Translation factors"/>
    <property type="match status" value="1"/>
</dbReference>
<dbReference type="HAMAP" id="MF_00144">
    <property type="entry name" value="tRNA_thiouridyl_MnmA"/>
    <property type="match status" value="1"/>
</dbReference>
<dbReference type="InterPro" id="IPR004506">
    <property type="entry name" value="MnmA-like"/>
</dbReference>
<dbReference type="InterPro" id="IPR046885">
    <property type="entry name" value="MnmA-like_C"/>
</dbReference>
<dbReference type="InterPro" id="IPR046884">
    <property type="entry name" value="MnmA-like_central"/>
</dbReference>
<dbReference type="InterPro" id="IPR023382">
    <property type="entry name" value="MnmA-like_central_sf"/>
</dbReference>
<dbReference type="InterPro" id="IPR014729">
    <property type="entry name" value="Rossmann-like_a/b/a_fold"/>
</dbReference>
<dbReference type="NCBIfam" id="NF001138">
    <property type="entry name" value="PRK00143.1"/>
    <property type="match status" value="1"/>
</dbReference>
<dbReference type="NCBIfam" id="TIGR00420">
    <property type="entry name" value="trmU"/>
    <property type="match status" value="1"/>
</dbReference>
<dbReference type="PANTHER" id="PTHR11933:SF5">
    <property type="entry name" value="MITOCHONDRIAL TRNA-SPECIFIC 2-THIOURIDYLASE 1"/>
    <property type="match status" value="1"/>
</dbReference>
<dbReference type="PANTHER" id="PTHR11933">
    <property type="entry name" value="TRNA 5-METHYLAMINOMETHYL-2-THIOURIDYLATE -METHYLTRANSFERASE"/>
    <property type="match status" value="1"/>
</dbReference>
<dbReference type="Pfam" id="PF03054">
    <property type="entry name" value="tRNA_Me_trans"/>
    <property type="match status" value="1"/>
</dbReference>
<dbReference type="Pfam" id="PF20258">
    <property type="entry name" value="tRNA_Me_trans_C"/>
    <property type="match status" value="1"/>
</dbReference>
<dbReference type="Pfam" id="PF20259">
    <property type="entry name" value="tRNA_Me_trans_M"/>
    <property type="match status" value="1"/>
</dbReference>
<dbReference type="SUPFAM" id="SSF52402">
    <property type="entry name" value="Adenine nucleotide alpha hydrolases-like"/>
    <property type="match status" value="1"/>
</dbReference>
<organism>
    <name type="scientific">Salinibacter ruber (strain DSM 13855 / M31)</name>
    <dbReference type="NCBI Taxonomy" id="309807"/>
    <lineage>
        <taxon>Bacteria</taxon>
        <taxon>Pseudomonadati</taxon>
        <taxon>Rhodothermota</taxon>
        <taxon>Rhodothermia</taxon>
        <taxon>Rhodothermales</taxon>
        <taxon>Salinibacteraceae</taxon>
        <taxon>Salinibacter</taxon>
    </lineage>
</organism>
<name>MNMA_SALRD</name>
<accession>Q2RZN9</accession>
<evidence type="ECO:0000255" key="1">
    <source>
        <dbReference type="HAMAP-Rule" id="MF_00144"/>
    </source>
</evidence>
<protein>
    <recommendedName>
        <fullName evidence="1">tRNA-specific 2-thiouridylase MnmA</fullName>
        <ecNumber evidence="1">2.8.1.13</ecNumber>
    </recommendedName>
</protein>